<evidence type="ECO:0000255" key="1">
    <source>
        <dbReference type="HAMAP-Rule" id="MF_01396"/>
    </source>
</evidence>
<dbReference type="EMBL" id="AE017340">
    <property type="protein sequence ID" value="AAV83456.1"/>
    <property type="molecule type" value="Genomic_DNA"/>
</dbReference>
<dbReference type="RefSeq" id="WP_011235847.1">
    <property type="nucleotide sequence ID" value="NC_006512.1"/>
</dbReference>
<dbReference type="SMR" id="Q5QZI1"/>
<dbReference type="STRING" id="283942.IL2624"/>
<dbReference type="GeneID" id="78253307"/>
<dbReference type="KEGG" id="ilo:IL2624"/>
<dbReference type="eggNOG" id="ENOG5032S3K">
    <property type="taxonomic scope" value="Bacteria"/>
</dbReference>
<dbReference type="HOGENOM" id="CLU_148047_1_0_6"/>
<dbReference type="OrthoDB" id="9811659at2"/>
<dbReference type="Proteomes" id="UP000001171">
    <property type="component" value="Chromosome"/>
</dbReference>
<dbReference type="GO" id="GO:0005886">
    <property type="term" value="C:plasma membrane"/>
    <property type="evidence" value="ECO:0007669"/>
    <property type="project" value="UniProtKB-SubCell"/>
</dbReference>
<dbReference type="GO" id="GO:0045259">
    <property type="term" value="C:proton-transporting ATP synthase complex"/>
    <property type="evidence" value="ECO:0007669"/>
    <property type="project" value="UniProtKB-KW"/>
</dbReference>
<dbReference type="GO" id="GO:0033177">
    <property type="term" value="C:proton-transporting two-sector ATPase complex, proton-transporting domain"/>
    <property type="evidence" value="ECO:0007669"/>
    <property type="project" value="InterPro"/>
</dbReference>
<dbReference type="GO" id="GO:0008289">
    <property type="term" value="F:lipid binding"/>
    <property type="evidence" value="ECO:0007669"/>
    <property type="project" value="UniProtKB-KW"/>
</dbReference>
<dbReference type="GO" id="GO:0046933">
    <property type="term" value="F:proton-transporting ATP synthase activity, rotational mechanism"/>
    <property type="evidence" value="ECO:0007669"/>
    <property type="project" value="UniProtKB-UniRule"/>
</dbReference>
<dbReference type="CDD" id="cd18185">
    <property type="entry name" value="ATP-synt_Fo_c_ATPE"/>
    <property type="match status" value="1"/>
</dbReference>
<dbReference type="FunFam" id="1.20.20.10:FF:000002">
    <property type="entry name" value="ATP synthase subunit c"/>
    <property type="match status" value="1"/>
</dbReference>
<dbReference type="Gene3D" id="1.20.20.10">
    <property type="entry name" value="F1F0 ATP synthase subunit C"/>
    <property type="match status" value="1"/>
</dbReference>
<dbReference type="HAMAP" id="MF_01396">
    <property type="entry name" value="ATP_synth_c_bact"/>
    <property type="match status" value="1"/>
</dbReference>
<dbReference type="InterPro" id="IPR005953">
    <property type="entry name" value="ATP_synth_csu_bac/chlpt"/>
</dbReference>
<dbReference type="InterPro" id="IPR000454">
    <property type="entry name" value="ATP_synth_F0_csu"/>
</dbReference>
<dbReference type="InterPro" id="IPR020537">
    <property type="entry name" value="ATP_synth_F0_csu_DDCD_BS"/>
</dbReference>
<dbReference type="InterPro" id="IPR038662">
    <property type="entry name" value="ATP_synth_F0_csu_sf"/>
</dbReference>
<dbReference type="InterPro" id="IPR002379">
    <property type="entry name" value="ATPase_proteolipid_c-like_dom"/>
</dbReference>
<dbReference type="InterPro" id="IPR035921">
    <property type="entry name" value="F/V-ATP_Csub_sf"/>
</dbReference>
<dbReference type="NCBIfam" id="TIGR01260">
    <property type="entry name" value="ATP_synt_c"/>
    <property type="match status" value="1"/>
</dbReference>
<dbReference type="NCBIfam" id="NF005363">
    <property type="entry name" value="PRK06876.1"/>
    <property type="match status" value="1"/>
</dbReference>
<dbReference type="Pfam" id="PF00137">
    <property type="entry name" value="ATP-synt_C"/>
    <property type="match status" value="1"/>
</dbReference>
<dbReference type="PRINTS" id="PR00124">
    <property type="entry name" value="ATPASEC"/>
</dbReference>
<dbReference type="SUPFAM" id="SSF81333">
    <property type="entry name" value="F1F0 ATP synthase subunit C"/>
    <property type="match status" value="1"/>
</dbReference>
<dbReference type="PROSITE" id="PS00605">
    <property type="entry name" value="ATPASE_C"/>
    <property type="match status" value="1"/>
</dbReference>
<proteinExistence type="inferred from homology"/>
<accession>Q5QZI1</accession>
<comment type="function">
    <text evidence="1">F(1)F(0) ATP synthase produces ATP from ADP in the presence of a proton or sodium gradient. F-type ATPases consist of two structural domains, F(1) containing the extramembraneous catalytic core and F(0) containing the membrane proton channel, linked together by a central stalk and a peripheral stalk. During catalysis, ATP synthesis in the catalytic domain of F(1) is coupled via a rotary mechanism of the central stalk subunits to proton translocation.</text>
</comment>
<comment type="function">
    <text evidence="1">Key component of the F(0) channel; it plays a direct role in translocation across the membrane. A homomeric c-ring of between 10-14 subunits forms the central stalk rotor element with the F(1) delta and epsilon subunits.</text>
</comment>
<comment type="subunit">
    <text evidence="1">F-type ATPases have 2 components, F(1) - the catalytic core - and F(0) - the membrane proton channel. F(1) has five subunits: alpha(3), beta(3), gamma(1), delta(1), epsilon(1). F(0) has three main subunits: a(1), b(2) and c(10-14). The alpha and beta chains form an alternating ring which encloses part of the gamma chain. F(1) is attached to F(0) by a central stalk formed by the gamma and epsilon chains, while a peripheral stalk is formed by the delta and b chains.</text>
</comment>
<comment type="subcellular location">
    <subcellularLocation>
        <location evidence="1">Cell inner membrane</location>
        <topology evidence="1">Multi-pass membrane protein</topology>
    </subcellularLocation>
</comment>
<comment type="similarity">
    <text evidence="1">Belongs to the ATPase C chain family.</text>
</comment>
<sequence>METVVAFTAIAVSIMIGLAALGTALGFGILGGKFLEAAARQPELAPQLQVKMFIVAGLIDAIAMIGVAVALLFTFANPFLTQVAG</sequence>
<organism>
    <name type="scientific">Idiomarina loihiensis (strain ATCC BAA-735 / DSM 15497 / L2-TR)</name>
    <dbReference type="NCBI Taxonomy" id="283942"/>
    <lineage>
        <taxon>Bacteria</taxon>
        <taxon>Pseudomonadati</taxon>
        <taxon>Pseudomonadota</taxon>
        <taxon>Gammaproteobacteria</taxon>
        <taxon>Alteromonadales</taxon>
        <taxon>Idiomarinaceae</taxon>
        <taxon>Idiomarina</taxon>
    </lineage>
</organism>
<protein>
    <recommendedName>
        <fullName evidence="1">ATP synthase subunit c</fullName>
    </recommendedName>
    <alternativeName>
        <fullName evidence="1">ATP synthase F(0) sector subunit c</fullName>
    </alternativeName>
    <alternativeName>
        <fullName evidence="1">F-type ATPase subunit c</fullName>
        <shortName evidence="1">F-ATPase subunit c</shortName>
    </alternativeName>
    <alternativeName>
        <fullName evidence="1">Lipid-binding protein</fullName>
    </alternativeName>
</protein>
<keyword id="KW-0066">ATP synthesis</keyword>
<keyword id="KW-0997">Cell inner membrane</keyword>
<keyword id="KW-1003">Cell membrane</keyword>
<keyword id="KW-0138">CF(0)</keyword>
<keyword id="KW-0375">Hydrogen ion transport</keyword>
<keyword id="KW-0406">Ion transport</keyword>
<keyword id="KW-0446">Lipid-binding</keyword>
<keyword id="KW-0472">Membrane</keyword>
<keyword id="KW-1185">Reference proteome</keyword>
<keyword id="KW-0812">Transmembrane</keyword>
<keyword id="KW-1133">Transmembrane helix</keyword>
<keyword id="KW-0813">Transport</keyword>
<name>ATPL_IDILO</name>
<reference key="1">
    <citation type="journal article" date="2004" name="Proc. Natl. Acad. Sci. U.S.A.">
        <title>Genome sequence of the deep-sea gamma-proteobacterium Idiomarina loihiensis reveals amino acid fermentation as a source of carbon and energy.</title>
        <authorList>
            <person name="Hou S."/>
            <person name="Saw J.H."/>
            <person name="Lee K.S."/>
            <person name="Freitas T.A."/>
            <person name="Belisle C."/>
            <person name="Kawarabayasi Y."/>
            <person name="Donachie S.P."/>
            <person name="Pikina A."/>
            <person name="Galperin M.Y."/>
            <person name="Koonin E.V."/>
            <person name="Makarova K.S."/>
            <person name="Omelchenko M.V."/>
            <person name="Sorokin A."/>
            <person name="Wolf Y.I."/>
            <person name="Li Q.X."/>
            <person name="Keum Y.S."/>
            <person name="Campbell S."/>
            <person name="Denery J."/>
            <person name="Aizawa S."/>
            <person name="Shibata S."/>
            <person name="Malahoff A."/>
            <person name="Alam M."/>
        </authorList>
    </citation>
    <scope>NUCLEOTIDE SEQUENCE [LARGE SCALE GENOMIC DNA]</scope>
    <source>
        <strain>ATCC BAA-735 / DSM 15497 / L2-TR</strain>
    </source>
</reference>
<feature type="chain" id="PRO_1000184398" description="ATP synthase subunit c">
    <location>
        <begin position="1"/>
        <end position="85"/>
    </location>
</feature>
<feature type="transmembrane region" description="Helical" evidence="1">
    <location>
        <begin position="10"/>
        <end position="30"/>
    </location>
</feature>
<feature type="transmembrane region" description="Helical" evidence="1">
    <location>
        <begin position="53"/>
        <end position="73"/>
    </location>
</feature>
<feature type="site" description="Reversibly protonated during proton transport" evidence="1">
    <location>
        <position position="60"/>
    </location>
</feature>
<gene>
    <name evidence="1" type="primary">atpE</name>
    <name type="ordered locus">IL2624</name>
</gene>